<organism>
    <name type="scientific">Salmonella typhimurium (strain LT2 / SGSC1412 / ATCC 700720)</name>
    <dbReference type="NCBI Taxonomy" id="99287"/>
    <lineage>
        <taxon>Bacteria</taxon>
        <taxon>Pseudomonadati</taxon>
        <taxon>Pseudomonadota</taxon>
        <taxon>Gammaproteobacteria</taxon>
        <taxon>Enterobacterales</taxon>
        <taxon>Enterobacteriaceae</taxon>
        <taxon>Salmonella</taxon>
    </lineage>
</organism>
<feature type="chain" id="PRO_0000201645" description="Virulence protein MsgA">
    <location>
        <begin position="1"/>
        <end position="79"/>
    </location>
</feature>
<protein>
    <recommendedName>
        <fullName>Virulence protein MsgA</fullName>
    </recommendedName>
</protein>
<name>MSGA_SALTY</name>
<comment type="function">
    <text>Affects survival in macrophages.</text>
</comment>
<comment type="similarity">
    <text evidence="1">Belongs to the DinI family.</text>
</comment>
<sequence>MFVELVYDKRNVEGLPGAREIILNELTKRVHQLFPDAQVKVKPMQANALNSDCTKTEKERLHRMLEEMFEEADMWLVAE</sequence>
<keyword id="KW-1185">Reference proteome</keyword>
<keyword id="KW-0843">Virulence</keyword>
<reference key="1">
    <citation type="journal article" date="1995" name="J. Bacteriol.">
        <title>Characterization of the Salmonella typhimurium pagC/pagD chromosomal region.</title>
        <authorList>
            <person name="Gunn J.S."/>
            <person name="Alpuche-Aranda C.M."/>
            <person name="Loomis W.P."/>
            <person name="Belden W.J."/>
            <person name="Miller S.I."/>
        </authorList>
    </citation>
    <scope>NUCLEOTIDE SEQUENCE [GENOMIC DNA]</scope>
    <source>
        <strain>ATCC 14028 / SGSG 2980 / CDC 6516-60 / NCTC 12023</strain>
    </source>
</reference>
<reference key="2">
    <citation type="journal article" date="2001" name="Nature">
        <title>Complete genome sequence of Salmonella enterica serovar Typhimurium LT2.</title>
        <authorList>
            <person name="McClelland M."/>
            <person name="Sanderson K.E."/>
            <person name="Spieth J."/>
            <person name="Clifton S.W."/>
            <person name="Latreille P."/>
            <person name="Courtney L."/>
            <person name="Porwollik S."/>
            <person name="Ali J."/>
            <person name="Dante M."/>
            <person name="Du F."/>
            <person name="Hou S."/>
            <person name="Layman D."/>
            <person name="Leonard S."/>
            <person name="Nguyen C."/>
            <person name="Scott K."/>
            <person name="Holmes A."/>
            <person name="Grewal N."/>
            <person name="Mulvaney E."/>
            <person name="Ryan E."/>
            <person name="Sun H."/>
            <person name="Florea L."/>
            <person name="Miller W."/>
            <person name="Stoneking T."/>
            <person name="Nhan M."/>
            <person name="Waterston R."/>
            <person name="Wilson R.K."/>
        </authorList>
    </citation>
    <scope>NUCLEOTIDE SEQUENCE [LARGE SCALE GENOMIC DNA]</scope>
    <source>
        <strain>LT2 / SGSC1412 / ATCC 700720</strain>
    </source>
</reference>
<accession>P0A1G3</accession>
<accession>Q56031</accession>
<dbReference type="EMBL" id="U31849">
    <property type="protein sequence ID" value="AAA82996.1"/>
    <property type="molecule type" value="Genomic_DNA"/>
</dbReference>
<dbReference type="EMBL" id="AE006468">
    <property type="protein sequence ID" value="AAL20170.1"/>
    <property type="molecule type" value="Genomic_DNA"/>
</dbReference>
<dbReference type="RefSeq" id="NP_460211.1">
    <property type="nucleotide sequence ID" value="NC_003197.2"/>
</dbReference>
<dbReference type="RefSeq" id="WP_000497451.1">
    <property type="nucleotide sequence ID" value="NC_003197.2"/>
</dbReference>
<dbReference type="SMR" id="P0A1G3"/>
<dbReference type="STRING" id="99287.STM1241"/>
<dbReference type="PaxDb" id="99287-STM1241"/>
<dbReference type="GeneID" id="1252759"/>
<dbReference type="KEGG" id="stm:STM1241"/>
<dbReference type="PATRIC" id="fig|99287.12.peg.1313"/>
<dbReference type="HOGENOM" id="CLU_169697_0_0_6"/>
<dbReference type="OMA" id="DMWLVNE"/>
<dbReference type="PhylomeDB" id="P0A1G3"/>
<dbReference type="BioCyc" id="SENT99287:STM1241-MONOMER"/>
<dbReference type="Proteomes" id="UP000001014">
    <property type="component" value="Chromosome"/>
</dbReference>
<dbReference type="Gene3D" id="3.30.910.10">
    <property type="entry name" value="DinI-like"/>
    <property type="match status" value="1"/>
</dbReference>
<dbReference type="InterPro" id="IPR036687">
    <property type="entry name" value="DinI-like_sf"/>
</dbReference>
<dbReference type="InterPro" id="IPR010391">
    <property type="entry name" value="DNA_damage-inducible_DinI-like"/>
</dbReference>
<dbReference type="PANTHER" id="PTHR36572">
    <property type="entry name" value="DNA DAMAGE-INDUCIBLE PROTEIN I-RELATED"/>
    <property type="match status" value="1"/>
</dbReference>
<dbReference type="PANTHER" id="PTHR36572:SF3">
    <property type="entry name" value="VIRULENCE PROTEIN MSGA"/>
    <property type="match status" value="1"/>
</dbReference>
<dbReference type="Pfam" id="PF06183">
    <property type="entry name" value="DinI"/>
    <property type="match status" value="1"/>
</dbReference>
<dbReference type="SUPFAM" id="SSF54857">
    <property type="entry name" value="DNA damage-inducible protein DinI"/>
    <property type="match status" value="1"/>
</dbReference>
<gene>
    <name type="primary">msgA</name>
    <name type="ordered locus">STM1241</name>
</gene>
<proteinExistence type="inferred from homology"/>
<evidence type="ECO:0000305" key="1"/>